<accession>Q4P5V8</accession>
<accession>A0A0D1DY08</accession>
<sequence>MRNRGVHRCIISVGSSNAAHVRRCAVSCCTLASANLARRDLTSSSAAHSNSGTFRDGRFDPYNAIIADITSSSTSSPSGAATKGRLKGWTAAIKSNICIRDHPTTCSSAMLQHFKPTFDASAVSLLRQAGTDIRYITNCDEFGMGSNNIHSVHGPVRNPASPRSESGPIWNLEEERVAGGSSGGSAAVVKAGLVRFALGSDTGGSVRLPAAYCGIVGLKPSYGLVSRWGLVSYADSLDTVGVLAKTVEDVSVVHSVLSQNDPHDPTSASQQARAAAATTVETLISALPSSNSSQPLKGLRVGVPKEYFPVELHPRVLPPFRRAVAGLEELGAQVVQITLPSTPSALSAYYIISSAEASSNLARYDGVEYGFHTPSAPGHHAYAATRTTAFGDEVRKRILLGTFALTADAYDNYFLQASRVRAQVQEDFASALRIRNASTKDDKLTARDQEGVDVILHPSAVDTAPTLAAAMQPGEPSAAEYVQDVLTVPASLAGLPALAVPAGAASDDGWPVGVTLVSQWGCDEVLLHVGKHLQTQLGT</sequence>
<proteinExistence type="inferred from homology"/>
<reference key="1">
    <citation type="journal article" date="2006" name="Nature">
        <title>Insights from the genome of the biotrophic fungal plant pathogen Ustilago maydis.</title>
        <authorList>
            <person name="Kaemper J."/>
            <person name="Kahmann R."/>
            <person name="Boelker M."/>
            <person name="Ma L.-J."/>
            <person name="Brefort T."/>
            <person name="Saville B.J."/>
            <person name="Banuett F."/>
            <person name="Kronstad J.W."/>
            <person name="Gold S.E."/>
            <person name="Mueller O."/>
            <person name="Perlin M.H."/>
            <person name="Woesten H.A.B."/>
            <person name="de Vries R."/>
            <person name="Ruiz-Herrera J."/>
            <person name="Reynaga-Pena C.G."/>
            <person name="Snetselaar K."/>
            <person name="McCann M."/>
            <person name="Perez-Martin J."/>
            <person name="Feldbruegge M."/>
            <person name="Basse C.W."/>
            <person name="Steinberg G."/>
            <person name="Ibeas J.I."/>
            <person name="Holloman W."/>
            <person name="Guzman P."/>
            <person name="Farman M.L."/>
            <person name="Stajich J.E."/>
            <person name="Sentandreu R."/>
            <person name="Gonzalez-Prieto J.M."/>
            <person name="Kennell J.C."/>
            <person name="Molina L."/>
            <person name="Schirawski J."/>
            <person name="Mendoza-Mendoza A."/>
            <person name="Greilinger D."/>
            <person name="Muench K."/>
            <person name="Roessel N."/>
            <person name="Scherer M."/>
            <person name="Vranes M."/>
            <person name="Ladendorf O."/>
            <person name="Vincon V."/>
            <person name="Fuchs U."/>
            <person name="Sandrock B."/>
            <person name="Meng S."/>
            <person name="Ho E.C.H."/>
            <person name="Cahill M.J."/>
            <person name="Boyce K.J."/>
            <person name="Klose J."/>
            <person name="Klosterman S.J."/>
            <person name="Deelstra H.J."/>
            <person name="Ortiz-Castellanos L."/>
            <person name="Li W."/>
            <person name="Sanchez-Alonso P."/>
            <person name="Schreier P.H."/>
            <person name="Haeuser-Hahn I."/>
            <person name="Vaupel M."/>
            <person name="Koopmann E."/>
            <person name="Friedrich G."/>
            <person name="Voss H."/>
            <person name="Schlueter T."/>
            <person name="Margolis J."/>
            <person name="Platt D."/>
            <person name="Swimmer C."/>
            <person name="Gnirke A."/>
            <person name="Chen F."/>
            <person name="Vysotskaia V."/>
            <person name="Mannhaupt G."/>
            <person name="Gueldener U."/>
            <person name="Muensterkoetter M."/>
            <person name="Haase D."/>
            <person name="Oesterheld M."/>
            <person name="Mewes H.-W."/>
            <person name="Mauceli E.W."/>
            <person name="DeCaprio D."/>
            <person name="Wade C.M."/>
            <person name="Butler J."/>
            <person name="Young S.K."/>
            <person name="Jaffe D.B."/>
            <person name="Calvo S.E."/>
            <person name="Nusbaum C."/>
            <person name="Galagan J.E."/>
            <person name="Birren B.W."/>
        </authorList>
    </citation>
    <scope>NUCLEOTIDE SEQUENCE [LARGE SCALE GENOMIC DNA]</scope>
    <source>
        <strain>DSM 14603 / FGSC 9021 / UM521</strain>
    </source>
</reference>
<reference key="2">
    <citation type="submission" date="2014-09" db="EMBL/GenBank/DDBJ databases">
        <authorList>
            <person name="Gueldener U."/>
            <person name="Muensterkoetter M."/>
            <person name="Walter M.C."/>
            <person name="Mannhaupt G."/>
            <person name="Kahmann R."/>
        </authorList>
    </citation>
    <scope>GENOME REANNOTATION</scope>
    <source>
        <strain>DSM 14603 / FGSC 9021 / UM521</strain>
    </source>
</reference>
<feature type="chain" id="PRO_0000413359" description="Glutamyl-tRNA(Gln) amidotransferase subunit A, mitochondrial">
    <location>
        <begin position="1"/>
        <end position="539"/>
    </location>
</feature>
<feature type="active site" description="Charge relay system" evidence="1">
    <location>
        <position position="94"/>
    </location>
</feature>
<feature type="active site" description="Charge relay system" evidence="1">
    <location>
        <position position="181"/>
    </location>
</feature>
<feature type="active site" description="Acyl-ester intermediate" evidence="1">
    <location>
        <position position="205"/>
    </location>
</feature>
<evidence type="ECO:0000255" key="1">
    <source>
        <dbReference type="HAMAP-Rule" id="MF_03150"/>
    </source>
</evidence>
<protein>
    <recommendedName>
        <fullName evidence="1">Glutamyl-tRNA(Gln) amidotransferase subunit A, mitochondrial</fullName>
        <shortName evidence="1">Glu-AdT subunit A</shortName>
        <ecNumber evidence="1">6.3.5.7</ecNumber>
    </recommendedName>
</protein>
<name>GATA_MYCMD</name>
<dbReference type="EC" id="6.3.5.7" evidence="1"/>
<dbReference type="EMBL" id="CM003152">
    <property type="protein sequence ID" value="KIS67405.1"/>
    <property type="molecule type" value="Genomic_DNA"/>
</dbReference>
<dbReference type="RefSeq" id="XP_011390837.1">
    <property type="nucleotide sequence ID" value="XM_011392535.1"/>
</dbReference>
<dbReference type="SMR" id="Q4P5V8"/>
<dbReference type="FunCoup" id="Q4P5V8">
    <property type="interactions" value="162"/>
</dbReference>
<dbReference type="STRING" id="237631.Q4P5V8"/>
<dbReference type="EnsemblFungi" id="KIS67405">
    <property type="protein sequence ID" value="KIS67405"/>
    <property type="gene ID" value="UMAG_04505"/>
</dbReference>
<dbReference type="GeneID" id="23564669"/>
<dbReference type="KEGG" id="uma:UMAG_04505"/>
<dbReference type="VEuPathDB" id="FungiDB:UMAG_04505"/>
<dbReference type="eggNOG" id="KOG1211">
    <property type="taxonomic scope" value="Eukaryota"/>
</dbReference>
<dbReference type="HOGENOM" id="CLU_009600_7_6_1"/>
<dbReference type="InParanoid" id="Q4P5V8"/>
<dbReference type="OMA" id="QPASYCG"/>
<dbReference type="OrthoDB" id="421993at2759"/>
<dbReference type="Proteomes" id="UP000000561">
    <property type="component" value="Chromosome 13"/>
</dbReference>
<dbReference type="GO" id="GO:0030956">
    <property type="term" value="C:glutamyl-tRNA(Gln) amidotransferase complex"/>
    <property type="evidence" value="ECO:0000318"/>
    <property type="project" value="GO_Central"/>
</dbReference>
<dbReference type="GO" id="GO:0005739">
    <property type="term" value="C:mitochondrion"/>
    <property type="evidence" value="ECO:0000318"/>
    <property type="project" value="GO_Central"/>
</dbReference>
<dbReference type="GO" id="GO:0005524">
    <property type="term" value="F:ATP binding"/>
    <property type="evidence" value="ECO:0007669"/>
    <property type="project" value="UniProtKB-KW"/>
</dbReference>
<dbReference type="GO" id="GO:0050567">
    <property type="term" value="F:glutaminyl-tRNA synthase (glutamine-hydrolyzing) activity"/>
    <property type="evidence" value="ECO:0000318"/>
    <property type="project" value="GO_Central"/>
</dbReference>
<dbReference type="GO" id="GO:0070681">
    <property type="term" value="P:glutaminyl-tRNAGln biosynthesis via transamidation"/>
    <property type="evidence" value="ECO:0000318"/>
    <property type="project" value="GO_Central"/>
</dbReference>
<dbReference type="GO" id="GO:0032543">
    <property type="term" value="P:mitochondrial translation"/>
    <property type="evidence" value="ECO:0000318"/>
    <property type="project" value="GO_Central"/>
</dbReference>
<dbReference type="Gene3D" id="3.90.1300.10">
    <property type="entry name" value="Amidase signature (AS) domain"/>
    <property type="match status" value="1"/>
</dbReference>
<dbReference type="HAMAP" id="MF_00120">
    <property type="entry name" value="GatA"/>
    <property type="match status" value="1"/>
</dbReference>
<dbReference type="InterPro" id="IPR000120">
    <property type="entry name" value="Amidase"/>
</dbReference>
<dbReference type="InterPro" id="IPR023631">
    <property type="entry name" value="Amidase_dom"/>
</dbReference>
<dbReference type="InterPro" id="IPR036928">
    <property type="entry name" value="AS_sf"/>
</dbReference>
<dbReference type="InterPro" id="IPR004412">
    <property type="entry name" value="GatA"/>
</dbReference>
<dbReference type="PANTHER" id="PTHR11895:SF7">
    <property type="entry name" value="GLUTAMYL-TRNA(GLN) AMIDOTRANSFERASE SUBUNIT A, MITOCHONDRIAL"/>
    <property type="match status" value="1"/>
</dbReference>
<dbReference type="PANTHER" id="PTHR11895">
    <property type="entry name" value="TRANSAMIDASE"/>
    <property type="match status" value="1"/>
</dbReference>
<dbReference type="Pfam" id="PF01425">
    <property type="entry name" value="Amidase"/>
    <property type="match status" value="1"/>
</dbReference>
<dbReference type="SUPFAM" id="SSF75304">
    <property type="entry name" value="Amidase signature (AS) enzymes"/>
    <property type="match status" value="1"/>
</dbReference>
<comment type="function">
    <text evidence="1">Allows the formation of correctly charged Gln-tRNA(Gln) through the transamidation of misacylated Glu-tRNA(Gln) in the mitochondria. The reaction takes place in the presence of glutamine and ATP through an activated gamma-phospho-Glu-tRNA(Gln).</text>
</comment>
<comment type="catalytic activity">
    <reaction evidence="1">
        <text>L-glutamyl-tRNA(Gln) + L-glutamine + ATP + H2O = L-glutaminyl-tRNA(Gln) + L-glutamate + ADP + phosphate + H(+)</text>
        <dbReference type="Rhea" id="RHEA:17521"/>
        <dbReference type="Rhea" id="RHEA-COMP:9681"/>
        <dbReference type="Rhea" id="RHEA-COMP:9684"/>
        <dbReference type="ChEBI" id="CHEBI:15377"/>
        <dbReference type="ChEBI" id="CHEBI:15378"/>
        <dbReference type="ChEBI" id="CHEBI:29985"/>
        <dbReference type="ChEBI" id="CHEBI:30616"/>
        <dbReference type="ChEBI" id="CHEBI:43474"/>
        <dbReference type="ChEBI" id="CHEBI:58359"/>
        <dbReference type="ChEBI" id="CHEBI:78520"/>
        <dbReference type="ChEBI" id="CHEBI:78521"/>
        <dbReference type="ChEBI" id="CHEBI:456216"/>
        <dbReference type="EC" id="6.3.5.7"/>
    </reaction>
</comment>
<comment type="subunit">
    <text evidence="1">Subunit of the heterotrimeric GatCAB amidotransferase (AdT) complex, composed of A, B and C subunits.</text>
</comment>
<comment type="subcellular location">
    <subcellularLocation>
        <location evidence="1">Mitochondrion</location>
    </subcellularLocation>
</comment>
<comment type="similarity">
    <text evidence="1">Belongs to the amidase family. GatA subfamily.</text>
</comment>
<keyword id="KW-0067">ATP-binding</keyword>
<keyword id="KW-0436">Ligase</keyword>
<keyword id="KW-0496">Mitochondrion</keyword>
<keyword id="KW-0547">Nucleotide-binding</keyword>
<keyword id="KW-0648">Protein biosynthesis</keyword>
<keyword id="KW-1185">Reference proteome</keyword>
<organism>
    <name type="scientific">Mycosarcoma maydis</name>
    <name type="common">Corn smut fungus</name>
    <name type="synonym">Ustilago maydis</name>
    <dbReference type="NCBI Taxonomy" id="5270"/>
    <lineage>
        <taxon>Eukaryota</taxon>
        <taxon>Fungi</taxon>
        <taxon>Dikarya</taxon>
        <taxon>Basidiomycota</taxon>
        <taxon>Ustilaginomycotina</taxon>
        <taxon>Ustilaginomycetes</taxon>
        <taxon>Ustilaginales</taxon>
        <taxon>Ustilaginaceae</taxon>
        <taxon>Mycosarcoma</taxon>
    </lineage>
</organism>
<gene>
    <name type="ORF">UMAG_04505</name>
</gene>